<proteinExistence type="evidence at protein level"/>
<keyword id="KW-0002">3D-structure</keyword>
<keyword id="KW-0007">Acetylation</keyword>
<keyword id="KW-0009">Actin-binding</keyword>
<keyword id="KW-0025">Alternative splicing</keyword>
<keyword id="KW-0106">Calcium</keyword>
<keyword id="KW-0965">Cell junction</keyword>
<keyword id="KW-1003">Cell membrane</keyword>
<keyword id="KW-0966">Cell projection</keyword>
<keyword id="KW-0963">Cytoplasm</keyword>
<keyword id="KW-0206">Cytoskeleton</keyword>
<keyword id="KW-0903">Direct protein sequencing</keyword>
<keyword id="KW-0225">Disease variant</keyword>
<keyword id="KW-0472">Membrane</keyword>
<keyword id="KW-0479">Metal-binding</keyword>
<keyword id="KW-0597">Phosphoprotein</keyword>
<keyword id="KW-1267">Proteomics identification</keyword>
<keyword id="KW-1185">Reference proteome</keyword>
<keyword id="KW-0677">Repeat</keyword>
<dbReference type="EMBL" id="X15804">
    <property type="protein sequence ID" value="CAA33803.1"/>
    <property type="molecule type" value="mRNA"/>
</dbReference>
<dbReference type="EMBL" id="M95178">
    <property type="protein sequence ID" value="AAA51582.1"/>
    <property type="molecule type" value="mRNA"/>
</dbReference>
<dbReference type="EMBL" id="EU716325">
    <property type="protein sequence ID" value="ACE62922.1"/>
    <property type="molecule type" value="mRNA"/>
</dbReference>
<dbReference type="EMBL" id="DQ496098">
    <property type="protein sequence ID" value="ABF50047.1"/>
    <property type="molecule type" value="mRNA"/>
</dbReference>
<dbReference type="EMBL" id="FJ410030">
    <property type="protein sequence ID" value="ACJ24535.1"/>
    <property type="molecule type" value="mRNA"/>
</dbReference>
<dbReference type="EMBL" id="BT007207">
    <property type="protein sequence ID" value="AAP35871.1"/>
    <property type="molecule type" value="mRNA"/>
</dbReference>
<dbReference type="EMBL" id="AK295099">
    <property type="protein sequence ID" value="BAG58135.1"/>
    <property type="molecule type" value="mRNA"/>
</dbReference>
<dbReference type="EMBL" id="AL117694">
    <property type="status" value="NOT_ANNOTATED_CDS"/>
    <property type="molecule type" value="Genomic_DNA"/>
</dbReference>
<dbReference type="EMBL" id="CH471061">
    <property type="protein sequence ID" value="EAW80975.1"/>
    <property type="molecule type" value="Genomic_DNA"/>
</dbReference>
<dbReference type="EMBL" id="BC003576">
    <property type="protein sequence ID" value="AAH03576.1"/>
    <property type="molecule type" value="mRNA"/>
</dbReference>
<dbReference type="EMBL" id="BC015766">
    <property type="protein sequence ID" value="AAH15766.1"/>
    <property type="molecule type" value="mRNA"/>
</dbReference>
<dbReference type="EMBL" id="X55187">
    <property type="protein sequence ID" value="CAA38970.1"/>
    <property type="molecule type" value="mRNA"/>
</dbReference>
<dbReference type="CCDS" id="CCDS45129.1">
    <molecule id="P12814-2"/>
</dbReference>
<dbReference type="CCDS" id="CCDS45130.1">
    <molecule id="P12814-3"/>
</dbReference>
<dbReference type="CCDS" id="CCDS9792.1">
    <molecule id="P12814-1"/>
</dbReference>
<dbReference type="PIR" id="S05503">
    <property type="entry name" value="FAHUAA"/>
</dbReference>
<dbReference type="RefSeq" id="NP_001093.1">
    <molecule id="P12814-1"/>
    <property type="nucleotide sequence ID" value="NM_001102.4"/>
</dbReference>
<dbReference type="RefSeq" id="NP_001123476.1">
    <molecule id="P12814-3"/>
    <property type="nucleotide sequence ID" value="NM_001130004.2"/>
</dbReference>
<dbReference type="RefSeq" id="NP_001123477.1">
    <molecule id="P12814-2"/>
    <property type="nucleotide sequence ID" value="NM_001130005.2"/>
</dbReference>
<dbReference type="RefSeq" id="NP_001410943.1">
    <molecule id="P12814-4"/>
    <property type="nucleotide sequence ID" value="NM_001424014.1"/>
</dbReference>
<dbReference type="PDB" id="2EYI">
    <property type="method" value="X-ray"/>
    <property type="resolution" value="1.70 A"/>
    <property type="chains" value="A=30-253"/>
</dbReference>
<dbReference type="PDB" id="2EYN">
    <property type="method" value="X-ray"/>
    <property type="resolution" value="1.80 A"/>
    <property type="chains" value="A=30-253"/>
</dbReference>
<dbReference type="PDB" id="2N8Y">
    <property type="method" value="NMR"/>
    <property type="chains" value="A=743-892"/>
</dbReference>
<dbReference type="PDB" id="2N8Z">
    <property type="method" value="NMR"/>
    <property type="chains" value="A=743-892"/>
</dbReference>
<dbReference type="PDBsum" id="2EYI"/>
<dbReference type="PDBsum" id="2EYN"/>
<dbReference type="PDBsum" id="2N8Y"/>
<dbReference type="PDBsum" id="2N8Z"/>
<dbReference type="SMR" id="P12814"/>
<dbReference type="BioGRID" id="106602">
    <property type="interactions" value="329"/>
</dbReference>
<dbReference type="CORUM" id="P12814"/>
<dbReference type="DIP" id="DIP-33184N"/>
<dbReference type="FunCoup" id="P12814">
    <property type="interactions" value="1036"/>
</dbReference>
<dbReference type="IntAct" id="P12814">
    <property type="interactions" value="134"/>
</dbReference>
<dbReference type="MINT" id="P12814"/>
<dbReference type="STRING" id="9606.ENSP00000377941"/>
<dbReference type="DrugBank" id="DB09130">
    <property type="generic name" value="Copper"/>
</dbReference>
<dbReference type="DrugBank" id="DB06773">
    <property type="generic name" value="Human calcitonin"/>
</dbReference>
<dbReference type="CarbonylDB" id="P12814"/>
<dbReference type="GlyCosmos" id="P12814">
    <property type="glycosylation" value="1 site, 2 glycans"/>
</dbReference>
<dbReference type="GlyGen" id="P12814">
    <property type="glycosylation" value="1 site, 2 O-linked glycans (1 site)"/>
</dbReference>
<dbReference type="iPTMnet" id="P12814"/>
<dbReference type="MetOSite" id="P12814"/>
<dbReference type="PhosphoSitePlus" id="P12814"/>
<dbReference type="SwissPalm" id="P12814"/>
<dbReference type="BioMuta" id="ACTN1"/>
<dbReference type="DMDM" id="46397817"/>
<dbReference type="OGP" id="P12814"/>
<dbReference type="jPOST" id="P12814"/>
<dbReference type="MassIVE" id="P12814"/>
<dbReference type="PaxDb" id="9606-ENSP00000377941"/>
<dbReference type="PeptideAtlas" id="P12814"/>
<dbReference type="PRIDE" id="P12814"/>
<dbReference type="ProteomicsDB" id="52871">
    <molecule id="P12814-1"/>
</dbReference>
<dbReference type="ProteomicsDB" id="52872">
    <molecule id="P12814-2"/>
</dbReference>
<dbReference type="ProteomicsDB" id="52873">
    <molecule id="P12814-3"/>
</dbReference>
<dbReference type="ProteomicsDB" id="6259"/>
<dbReference type="Pumba" id="P12814"/>
<dbReference type="Antibodypedia" id="51">
    <property type="antibodies" value="474 antibodies from 39 providers"/>
</dbReference>
<dbReference type="DNASU" id="87"/>
<dbReference type="Ensembl" id="ENST00000193403.11">
    <molecule id="P12814-1"/>
    <property type="protein sequence ID" value="ENSP00000193403.6"/>
    <property type="gene ID" value="ENSG00000072110.17"/>
</dbReference>
<dbReference type="Ensembl" id="ENST00000394419.9">
    <molecule id="P12814-3"/>
    <property type="protein sequence ID" value="ENSP00000377941.4"/>
    <property type="gene ID" value="ENSG00000072110.17"/>
</dbReference>
<dbReference type="Ensembl" id="ENST00000438964.6">
    <molecule id="P12814-2"/>
    <property type="protein sequence ID" value="ENSP00000414272.2"/>
    <property type="gene ID" value="ENSG00000072110.17"/>
</dbReference>
<dbReference type="Ensembl" id="ENST00000538545.6">
    <molecule id="P12814-4"/>
    <property type="protein sequence ID" value="ENSP00000439828.2"/>
    <property type="gene ID" value="ENSG00000072110.17"/>
</dbReference>
<dbReference type="GeneID" id="87"/>
<dbReference type="KEGG" id="hsa:87"/>
<dbReference type="MANE-Select" id="ENST00000394419.9">
    <molecule id="P12814-3"/>
    <property type="protein sequence ID" value="ENSP00000377941.4"/>
    <property type="RefSeq nucleotide sequence ID" value="NM_001130004.2"/>
    <property type="RefSeq protein sequence ID" value="NP_001123476.1"/>
</dbReference>
<dbReference type="UCSC" id="uc001xkl.4">
    <molecule id="P12814-1"/>
    <property type="organism name" value="human"/>
</dbReference>
<dbReference type="AGR" id="HGNC:163"/>
<dbReference type="CTD" id="87"/>
<dbReference type="DisGeNET" id="87"/>
<dbReference type="GeneCards" id="ACTN1"/>
<dbReference type="HGNC" id="HGNC:163">
    <property type="gene designation" value="ACTN1"/>
</dbReference>
<dbReference type="HPA" id="ENSG00000072110">
    <property type="expression patterns" value="Tissue enhanced (smooth)"/>
</dbReference>
<dbReference type="MalaCards" id="ACTN1"/>
<dbReference type="MIM" id="102575">
    <property type="type" value="gene"/>
</dbReference>
<dbReference type="MIM" id="615193">
    <property type="type" value="phenotype"/>
</dbReference>
<dbReference type="neXtProt" id="NX_P12814"/>
<dbReference type="OpenTargets" id="ENSG00000072110"/>
<dbReference type="Orphanet" id="140957">
    <property type="disease" value="Autosomal dominant macrothrombocytopenia"/>
</dbReference>
<dbReference type="PharmGKB" id="PA24"/>
<dbReference type="VEuPathDB" id="HostDB:ENSG00000072110"/>
<dbReference type="eggNOG" id="KOG0035">
    <property type="taxonomic scope" value="Eukaryota"/>
</dbReference>
<dbReference type="GeneTree" id="ENSGT00940000155548"/>
<dbReference type="HOGENOM" id="CLU_005217_1_1_1"/>
<dbReference type="InParanoid" id="P12814"/>
<dbReference type="OMA" id="QQRWITV"/>
<dbReference type="OrthoDB" id="10017054at2759"/>
<dbReference type="PAN-GO" id="P12814">
    <property type="GO annotations" value="9 GO annotations based on evolutionary models"/>
</dbReference>
<dbReference type="PhylomeDB" id="P12814"/>
<dbReference type="TreeFam" id="TF352676"/>
<dbReference type="PathwayCommons" id="P12814"/>
<dbReference type="Reactome" id="R-HSA-114608">
    <property type="pathway name" value="Platelet degranulation"/>
</dbReference>
<dbReference type="Reactome" id="R-HSA-3000170">
    <property type="pathway name" value="Syndecan interactions"/>
</dbReference>
<dbReference type="Reactome" id="R-HSA-373753">
    <property type="pathway name" value="Nephrin family interactions"/>
</dbReference>
<dbReference type="Reactome" id="R-HSA-446388">
    <property type="pathway name" value="Regulation of cytoskeletal remodeling and cell spreading by IPP complex components"/>
</dbReference>
<dbReference type="Reactome" id="R-HSA-9013405">
    <property type="pathway name" value="RHOD GTPase cycle"/>
</dbReference>
<dbReference type="Reactome" id="R-HSA-9013418">
    <property type="pathway name" value="RHOBTB2 GTPase cycle"/>
</dbReference>
<dbReference type="Reactome" id="R-HSA-9035034">
    <property type="pathway name" value="RHOF GTPase cycle"/>
</dbReference>
<dbReference type="SignaLink" id="P12814"/>
<dbReference type="SIGNOR" id="P12814"/>
<dbReference type="BioGRID-ORCS" id="87">
    <property type="hits" value="17 hits in 1163 CRISPR screens"/>
</dbReference>
<dbReference type="CD-CODE" id="3EAB04FE">
    <property type="entry name" value="Rapsn condensate"/>
</dbReference>
<dbReference type="CD-CODE" id="FB4E32DD">
    <property type="entry name" value="Presynaptic clusters and postsynaptic densities"/>
</dbReference>
<dbReference type="ChiTaRS" id="ACTN1">
    <property type="organism name" value="human"/>
</dbReference>
<dbReference type="EvolutionaryTrace" id="P12814"/>
<dbReference type="GeneWiki" id="Actinin,_alpha_1"/>
<dbReference type="GenomeRNAi" id="87"/>
<dbReference type="Pharos" id="P12814">
    <property type="development level" value="Tbio"/>
</dbReference>
<dbReference type="PRO" id="PR:P12814"/>
<dbReference type="Proteomes" id="UP000005640">
    <property type="component" value="Chromosome 14"/>
</dbReference>
<dbReference type="RNAct" id="P12814">
    <property type="molecule type" value="protein"/>
</dbReference>
<dbReference type="Bgee" id="ENSG00000072110">
    <property type="expression patterns" value="Expressed in blood vessel layer and 207 other cell types or tissues"/>
</dbReference>
<dbReference type="ExpressionAtlas" id="P12814">
    <property type="expression patterns" value="baseline and differential"/>
</dbReference>
<dbReference type="GO" id="GO:0005903">
    <property type="term" value="C:brush border"/>
    <property type="evidence" value="ECO:0007669"/>
    <property type="project" value="Ensembl"/>
</dbReference>
<dbReference type="GO" id="GO:0030054">
    <property type="term" value="C:cell junction"/>
    <property type="evidence" value="ECO:0000318"/>
    <property type="project" value="GO_Central"/>
</dbReference>
<dbReference type="GO" id="GO:0042995">
    <property type="term" value="C:cell projection"/>
    <property type="evidence" value="ECO:0000314"/>
    <property type="project" value="UniProtKB"/>
</dbReference>
<dbReference type="GO" id="GO:0005911">
    <property type="term" value="C:cell-cell junction"/>
    <property type="evidence" value="ECO:0000314"/>
    <property type="project" value="UniProtKB"/>
</dbReference>
<dbReference type="GO" id="GO:0030864">
    <property type="term" value="C:cortical actin cytoskeleton"/>
    <property type="evidence" value="ECO:0000318"/>
    <property type="project" value="GO_Central"/>
</dbReference>
<dbReference type="GO" id="GO:0005737">
    <property type="term" value="C:cytoplasm"/>
    <property type="evidence" value="ECO:0000314"/>
    <property type="project" value="UniProtKB"/>
</dbReference>
<dbReference type="GO" id="GO:0005829">
    <property type="term" value="C:cytosol"/>
    <property type="evidence" value="ECO:0000304"/>
    <property type="project" value="Reactome"/>
</dbReference>
<dbReference type="GO" id="GO:0070062">
    <property type="term" value="C:extracellular exosome"/>
    <property type="evidence" value="ECO:0007005"/>
    <property type="project" value="UniProtKB"/>
</dbReference>
<dbReference type="GO" id="GO:0005576">
    <property type="term" value="C:extracellular region"/>
    <property type="evidence" value="ECO:0000304"/>
    <property type="project" value="Reactome"/>
</dbReference>
<dbReference type="GO" id="GO:0005615">
    <property type="term" value="C:extracellular space"/>
    <property type="evidence" value="ECO:0007005"/>
    <property type="project" value="UniProtKB"/>
</dbReference>
<dbReference type="GO" id="GO:0005916">
    <property type="term" value="C:fascia adherens"/>
    <property type="evidence" value="ECO:0007669"/>
    <property type="project" value="Ensembl"/>
</dbReference>
<dbReference type="GO" id="GO:0005925">
    <property type="term" value="C:focal adhesion"/>
    <property type="evidence" value="ECO:0000314"/>
    <property type="project" value="UniProtKB"/>
</dbReference>
<dbReference type="GO" id="GO:0098978">
    <property type="term" value="C:glutamatergic synapse"/>
    <property type="evidence" value="ECO:0000314"/>
    <property type="project" value="SynGO"/>
</dbReference>
<dbReference type="GO" id="GO:0005886">
    <property type="term" value="C:plasma membrane"/>
    <property type="evidence" value="ECO:0000318"/>
    <property type="project" value="GO_Central"/>
</dbReference>
<dbReference type="GO" id="GO:0031093">
    <property type="term" value="C:platelet alpha granule lumen"/>
    <property type="evidence" value="ECO:0000304"/>
    <property type="project" value="Reactome"/>
</dbReference>
<dbReference type="GO" id="GO:0031143">
    <property type="term" value="C:pseudopodium"/>
    <property type="evidence" value="ECO:0000304"/>
    <property type="project" value="UniProtKB"/>
</dbReference>
<dbReference type="GO" id="GO:0001726">
    <property type="term" value="C:ruffle"/>
    <property type="evidence" value="ECO:0000314"/>
    <property type="project" value="UniProtKB"/>
</dbReference>
<dbReference type="GO" id="GO:0001725">
    <property type="term" value="C:stress fiber"/>
    <property type="evidence" value="ECO:0000314"/>
    <property type="project" value="UniProtKB"/>
</dbReference>
<dbReference type="GO" id="GO:0030018">
    <property type="term" value="C:Z disc"/>
    <property type="evidence" value="ECO:0000314"/>
    <property type="project" value="UniProtKB"/>
</dbReference>
<dbReference type="GO" id="GO:0051015">
    <property type="term" value="F:actin filament binding"/>
    <property type="evidence" value="ECO:0000314"/>
    <property type="project" value="UniProtKB"/>
</dbReference>
<dbReference type="GO" id="GO:0005509">
    <property type="term" value="F:calcium ion binding"/>
    <property type="evidence" value="ECO:0007669"/>
    <property type="project" value="InterPro"/>
</dbReference>
<dbReference type="GO" id="GO:0003725">
    <property type="term" value="F:double-stranded RNA binding"/>
    <property type="evidence" value="ECO:0000314"/>
    <property type="project" value="MGI"/>
</dbReference>
<dbReference type="GO" id="GO:0005178">
    <property type="term" value="F:integrin binding"/>
    <property type="evidence" value="ECO:0000314"/>
    <property type="project" value="UniProtKB"/>
</dbReference>
<dbReference type="GO" id="GO:0042803">
    <property type="term" value="F:protein homodimerization activity"/>
    <property type="evidence" value="ECO:0000314"/>
    <property type="project" value="UniProtKB"/>
</dbReference>
<dbReference type="GO" id="GO:0099186">
    <property type="term" value="F:structural constituent of postsynapse"/>
    <property type="evidence" value="ECO:0000314"/>
    <property type="project" value="SynGO"/>
</dbReference>
<dbReference type="GO" id="GO:0003713">
    <property type="term" value="F:transcription coactivator activity"/>
    <property type="evidence" value="ECO:0000314"/>
    <property type="project" value="UniProtKB"/>
</dbReference>
<dbReference type="GO" id="GO:0044325">
    <property type="term" value="F:transmembrane transporter binding"/>
    <property type="evidence" value="ECO:0000353"/>
    <property type="project" value="UniProtKB"/>
</dbReference>
<dbReference type="GO" id="GO:0017166">
    <property type="term" value="F:vinculin binding"/>
    <property type="evidence" value="ECO:0000314"/>
    <property type="project" value="UniProtKB"/>
</dbReference>
<dbReference type="GO" id="GO:0030036">
    <property type="term" value="P:actin cytoskeleton organization"/>
    <property type="evidence" value="ECO:0000318"/>
    <property type="project" value="GO_Central"/>
</dbReference>
<dbReference type="GO" id="GO:0051017">
    <property type="term" value="P:actin filament bundle assembly"/>
    <property type="evidence" value="ECO:0007669"/>
    <property type="project" value="Ensembl"/>
</dbReference>
<dbReference type="GO" id="GO:0051639">
    <property type="term" value="P:actin filament network formation"/>
    <property type="evidence" value="ECO:0000315"/>
    <property type="project" value="UniProtKB"/>
</dbReference>
<dbReference type="GO" id="GO:0007015">
    <property type="term" value="P:actin filament organization"/>
    <property type="evidence" value="ECO:0000315"/>
    <property type="project" value="UniProtKB"/>
</dbReference>
<dbReference type="GO" id="GO:0048041">
    <property type="term" value="P:focal adhesion assembly"/>
    <property type="evidence" value="ECO:0000315"/>
    <property type="project" value="UniProtKB"/>
</dbReference>
<dbReference type="GO" id="GO:0055001">
    <property type="term" value="P:muscle cell development"/>
    <property type="evidence" value="ECO:0000318"/>
    <property type="project" value="GO_Central"/>
</dbReference>
<dbReference type="GO" id="GO:0030220">
    <property type="term" value="P:platelet formation"/>
    <property type="evidence" value="ECO:0000315"/>
    <property type="project" value="UniProtKB"/>
</dbReference>
<dbReference type="GO" id="GO:0036344">
    <property type="term" value="P:platelet morphogenesis"/>
    <property type="evidence" value="ECO:0000315"/>
    <property type="project" value="UniProtKB"/>
</dbReference>
<dbReference type="GO" id="GO:0042981">
    <property type="term" value="P:regulation of apoptotic process"/>
    <property type="evidence" value="ECO:0000303"/>
    <property type="project" value="UniProtKB"/>
</dbReference>
<dbReference type="CDD" id="cd21214">
    <property type="entry name" value="CH_ACTN_rpt1"/>
    <property type="match status" value="1"/>
</dbReference>
<dbReference type="CDD" id="cd21216">
    <property type="entry name" value="CH_ACTN_rpt2"/>
    <property type="match status" value="1"/>
</dbReference>
<dbReference type="CDD" id="cd00051">
    <property type="entry name" value="EFh"/>
    <property type="match status" value="1"/>
</dbReference>
<dbReference type="CDD" id="cd00176">
    <property type="entry name" value="SPEC"/>
    <property type="match status" value="2"/>
</dbReference>
<dbReference type="FunFam" id="1.10.238.10:FF:000004">
    <property type="entry name" value="Actinin alpha 1"/>
    <property type="match status" value="1"/>
</dbReference>
<dbReference type="FunFam" id="1.10.418.10:FF:000001">
    <property type="entry name" value="Actinin alpha 1"/>
    <property type="match status" value="1"/>
</dbReference>
<dbReference type="FunFam" id="1.20.58.60:FF:000004">
    <property type="entry name" value="Actinin alpha 1"/>
    <property type="match status" value="1"/>
</dbReference>
<dbReference type="FunFam" id="1.20.58.60:FF:000005">
    <property type="entry name" value="Actinin alpha 1"/>
    <property type="match status" value="1"/>
</dbReference>
<dbReference type="FunFam" id="1.10.418.10:FF:000005">
    <property type="entry name" value="Actinin alpha 4"/>
    <property type="match status" value="1"/>
</dbReference>
<dbReference type="FunFam" id="1.10.238.10:FF:000018">
    <property type="entry name" value="Actinin, alpha 1"/>
    <property type="match status" value="1"/>
</dbReference>
<dbReference type="FunFam" id="1.20.58.60:FF:000002">
    <property type="entry name" value="Actinin, alpha 1"/>
    <property type="match status" value="1"/>
</dbReference>
<dbReference type="FunFam" id="1.20.58.60:FF:000003">
    <property type="entry name" value="Actinin, alpha 1"/>
    <property type="match status" value="1"/>
</dbReference>
<dbReference type="Gene3D" id="1.20.58.60">
    <property type="match status" value="4"/>
</dbReference>
<dbReference type="Gene3D" id="1.10.418.10">
    <property type="entry name" value="Calponin-like domain"/>
    <property type="match status" value="2"/>
</dbReference>
<dbReference type="Gene3D" id="1.10.238.10">
    <property type="entry name" value="EF-hand"/>
    <property type="match status" value="2"/>
</dbReference>
<dbReference type="InterPro" id="IPR001589">
    <property type="entry name" value="Actinin_actin-bd_CS"/>
</dbReference>
<dbReference type="InterPro" id="IPR001715">
    <property type="entry name" value="CH_dom"/>
</dbReference>
<dbReference type="InterPro" id="IPR036872">
    <property type="entry name" value="CH_dom_sf"/>
</dbReference>
<dbReference type="InterPro" id="IPR011992">
    <property type="entry name" value="EF-hand-dom_pair"/>
</dbReference>
<dbReference type="InterPro" id="IPR014837">
    <property type="entry name" value="EF-hand_Ca_insen"/>
</dbReference>
<dbReference type="InterPro" id="IPR018247">
    <property type="entry name" value="EF_Hand_1_Ca_BS"/>
</dbReference>
<dbReference type="InterPro" id="IPR002048">
    <property type="entry name" value="EF_hand_dom"/>
</dbReference>
<dbReference type="InterPro" id="IPR018159">
    <property type="entry name" value="Spectrin/alpha-actinin"/>
</dbReference>
<dbReference type="InterPro" id="IPR002017">
    <property type="entry name" value="Spectrin_repeat"/>
</dbReference>
<dbReference type="PANTHER" id="PTHR11915">
    <property type="entry name" value="SPECTRIN/FILAMIN RELATED CYTOSKELETAL PROTEIN"/>
    <property type="match status" value="1"/>
</dbReference>
<dbReference type="Pfam" id="PF00307">
    <property type="entry name" value="CH"/>
    <property type="match status" value="2"/>
</dbReference>
<dbReference type="Pfam" id="PF13405">
    <property type="entry name" value="EF-hand_6"/>
    <property type="match status" value="1"/>
</dbReference>
<dbReference type="Pfam" id="PF08726">
    <property type="entry name" value="EFhand_Ca_insen"/>
    <property type="match status" value="1"/>
</dbReference>
<dbReference type="Pfam" id="PF00435">
    <property type="entry name" value="Spectrin"/>
    <property type="match status" value="4"/>
</dbReference>
<dbReference type="SMART" id="SM00033">
    <property type="entry name" value="CH"/>
    <property type="match status" value="2"/>
</dbReference>
<dbReference type="SMART" id="SM00054">
    <property type="entry name" value="EFh"/>
    <property type="match status" value="2"/>
</dbReference>
<dbReference type="SMART" id="SM01184">
    <property type="entry name" value="efhand_Ca_insen"/>
    <property type="match status" value="1"/>
</dbReference>
<dbReference type="SMART" id="SM00150">
    <property type="entry name" value="SPEC"/>
    <property type="match status" value="3"/>
</dbReference>
<dbReference type="SUPFAM" id="SSF47576">
    <property type="entry name" value="Calponin-homology domain, CH-domain"/>
    <property type="match status" value="1"/>
</dbReference>
<dbReference type="SUPFAM" id="SSF47473">
    <property type="entry name" value="EF-hand"/>
    <property type="match status" value="1"/>
</dbReference>
<dbReference type="SUPFAM" id="SSF46966">
    <property type="entry name" value="Spectrin repeat"/>
    <property type="match status" value="4"/>
</dbReference>
<dbReference type="PROSITE" id="PS00019">
    <property type="entry name" value="ACTININ_1"/>
    <property type="match status" value="1"/>
</dbReference>
<dbReference type="PROSITE" id="PS00020">
    <property type="entry name" value="ACTININ_2"/>
    <property type="match status" value="1"/>
</dbReference>
<dbReference type="PROSITE" id="PS50021">
    <property type="entry name" value="CH"/>
    <property type="match status" value="2"/>
</dbReference>
<dbReference type="PROSITE" id="PS00018">
    <property type="entry name" value="EF_HAND_1"/>
    <property type="match status" value="1"/>
</dbReference>
<dbReference type="PROSITE" id="PS50222">
    <property type="entry name" value="EF_HAND_2"/>
    <property type="match status" value="2"/>
</dbReference>
<reference key="1">
    <citation type="journal article" date="1989" name="Nucleic Acids Res.">
        <title>The cDNA sequence of a human placental alpha-actinin.</title>
        <authorList>
            <person name="Millake D.B."/>
            <person name="Blanchard A.D."/>
            <person name="Patel B."/>
            <person name="Critchley D.R."/>
        </authorList>
    </citation>
    <scope>NUCLEOTIDE SEQUENCE [MRNA] (ISOFORM 1)</scope>
    <source>
        <tissue>Placenta</tissue>
    </source>
</reference>
<reference key="2">
    <citation type="journal article" date="1990" name="Am. J. Hum. Genet.">
        <title>Cloning and chromosomal localization of the human cytoskeletal alpha-actinin gene reveals linkage to the beta-spectrin gene.</title>
        <authorList>
            <person name="Youssoufian H."/>
            <person name="McAfee M."/>
            <person name="Kwiatkowski D.J."/>
        </authorList>
    </citation>
    <scope>NUCLEOTIDE SEQUENCE [MRNA] (ISOFORM 1)</scope>
</reference>
<reference key="3">
    <citation type="journal article" date="2008" name="Mol. Cell. Proteomics">
        <title>Alternative splicing in colon, bladder, and prostate cancer identified by exon array analysis.</title>
        <authorList>
            <person name="Thorsen K."/>
            <person name="Sorensen K.D."/>
            <person name="Brems-Eskildsen A.S."/>
            <person name="Modin C."/>
            <person name="Gaustadnes M."/>
            <person name="Hein A.M."/>
            <person name="Kruhoffer M."/>
            <person name="Laurberg S."/>
            <person name="Borre M."/>
            <person name="Wang K."/>
            <person name="Brunak S."/>
            <person name="Krainer A.R."/>
            <person name="Torring N."/>
            <person name="Dyrskjot L."/>
            <person name="Andersen C.L."/>
            <person name="Orntoft T.F."/>
        </authorList>
    </citation>
    <scope>NUCLEOTIDE SEQUENCE [MRNA] (ISOFORM 2)</scope>
</reference>
<reference key="4">
    <citation type="submission" date="2006-04" db="EMBL/GenBank/DDBJ databases">
        <title>A new mRNA isoform from ACTN1 gene.</title>
        <authorList>
            <person name="Mancini U.M."/>
            <person name="Tajara E.H."/>
        </authorList>
    </citation>
    <scope>NUCLEOTIDE SEQUENCE [MRNA] (ISOFORM 3)</scope>
    <source>
        <tissue>Tongue</tissue>
    </source>
</reference>
<reference key="5">
    <citation type="submission" date="2008-10" db="EMBL/GenBank/DDBJ databases">
        <title>Actinin alpha 1 alternative splicing variant.</title>
        <authorList>
            <person name="Mansilla F."/>
            <person name="Orntoft T.F."/>
            <person name="Birkenkamp-Demtroeder K."/>
        </authorList>
    </citation>
    <scope>NUCLEOTIDE SEQUENCE [MRNA] (ISOFORM 4)</scope>
</reference>
<reference key="6">
    <citation type="submission" date="2003-05" db="EMBL/GenBank/DDBJ databases">
        <title>Cloning of human full-length CDSs in BD Creator(TM) system donor vector.</title>
        <authorList>
            <person name="Kalnine N."/>
            <person name="Chen X."/>
            <person name="Rolfs A."/>
            <person name="Halleck A."/>
            <person name="Hines L."/>
            <person name="Eisenstein S."/>
            <person name="Koundinya M."/>
            <person name="Raphael J."/>
            <person name="Moreira D."/>
            <person name="Kelley T."/>
            <person name="LaBaer J."/>
            <person name="Lin Y."/>
            <person name="Phelan M."/>
            <person name="Farmer A."/>
        </authorList>
    </citation>
    <scope>NUCLEOTIDE SEQUENCE [LARGE SCALE MRNA] (ISOFORM 1)</scope>
</reference>
<reference key="7">
    <citation type="journal article" date="2004" name="Nat. Genet.">
        <title>Complete sequencing and characterization of 21,243 full-length human cDNAs.</title>
        <authorList>
            <person name="Ota T."/>
            <person name="Suzuki Y."/>
            <person name="Nishikawa T."/>
            <person name="Otsuki T."/>
            <person name="Sugiyama T."/>
            <person name="Irie R."/>
            <person name="Wakamatsu A."/>
            <person name="Hayashi K."/>
            <person name="Sato H."/>
            <person name="Nagai K."/>
            <person name="Kimura K."/>
            <person name="Makita H."/>
            <person name="Sekine M."/>
            <person name="Obayashi M."/>
            <person name="Nishi T."/>
            <person name="Shibahara T."/>
            <person name="Tanaka T."/>
            <person name="Ishii S."/>
            <person name="Yamamoto J."/>
            <person name="Saito K."/>
            <person name="Kawai Y."/>
            <person name="Isono Y."/>
            <person name="Nakamura Y."/>
            <person name="Nagahari K."/>
            <person name="Murakami K."/>
            <person name="Yasuda T."/>
            <person name="Iwayanagi T."/>
            <person name="Wagatsuma M."/>
            <person name="Shiratori A."/>
            <person name="Sudo H."/>
            <person name="Hosoiri T."/>
            <person name="Kaku Y."/>
            <person name="Kodaira H."/>
            <person name="Kondo H."/>
            <person name="Sugawara M."/>
            <person name="Takahashi M."/>
            <person name="Kanda K."/>
            <person name="Yokoi T."/>
            <person name="Furuya T."/>
            <person name="Kikkawa E."/>
            <person name="Omura Y."/>
            <person name="Abe K."/>
            <person name="Kamihara K."/>
            <person name="Katsuta N."/>
            <person name="Sato K."/>
            <person name="Tanikawa M."/>
            <person name="Yamazaki M."/>
            <person name="Ninomiya K."/>
            <person name="Ishibashi T."/>
            <person name="Yamashita H."/>
            <person name="Murakawa K."/>
            <person name="Fujimori K."/>
            <person name="Tanai H."/>
            <person name="Kimata M."/>
            <person name="Watanabe M."/>
            <person name="Hiraoka S."/>
            <person name="Chiba Y."/>
            <person name="Ishida S."/>
            <person name="Ono Y."/>
            <person name="Takiguchi S."/>
            <person name="Watanabe S."/>
            <person name="Yosida M."/>
            <person name="Hotuta T."/>
            <person name="Kusano J."/>
            <person name="Kanehori K."/>
            <person name="Takahashi-Fujii A."/>
            <person name="Hara H."/>
            <person name="Tanase T.-O."/>
            <person name="Nomura Y."/>
            <person name="Togiya S."/>
            <person name="Komai F."/>
            <person name="Hara R."/>
            <person name="Takeuchi K."/>
            <person name="Arita M."/>
            <person name="Imose N."/>
            <person name="Musashino K."/>
            <person name="Yuuki H."/>
            <person name="Oshima A."/>
            <person name="Sasaki N."/>
            <person name="Aotsuka S."/>
            <person name="Yoshikawa Y."/>
            <person name="Matsunawa H."/>
            <person name="Ichihara T."/>
            <person name="Shiohata N."/>
            <person name="Sano S."/>
            <person name="Moriya S."/>
            <person name="Momiyama H."/>
            <person name="Satoh N."/>
            <person name="Takami S."/>
            <person name="Terashima Y."/>
            <person name="Suzuki O."/>
            <person name="Nakagawa S."/>
            <person name="Senoh A."/>
            <person name="Mizoguchi H."/>
            <person name="Goto Y."/>
            <person name="Shimizu F."/>
            <person name="Wakebe H."/>
            <person name="Hishigaki H."/>
            <person name="Watanabe T."/>
            <person name="Sugiyama A."/>
            <person name="Takemoto M."/>
            <person name="Kawakami B."/>
            <person name="Yamazaki M."/>
            <person name="Watanabe K."/>
            <person name="Kumagai A."/>
            <person name="Itakura S."/>
            <person name="Fukuzumi Y."/>
            <person name="Fujimori Y."/>
            <person name="Komiyama M."/>
            <person name="Tashiro H."/>
            <person name="Tanigami A."/>
            <person name="Fujiwara T."/>
            <person name="Ono T."/>
            <person name="Yamada K."/>
            <person name="Fujii Y."/>
            <person name="Ozaki K."/>
            <person name="Hirao M."/>
            <person name="Ohmori Y."/>
            <person name="Kawabata A."/>
            <person name="Hikiji T."/>
            <person name="Kobatake N."/>
            <person name="Inagaki H."/>
            <person name="Ikema Y."/>
            <person name="Okamoto S."/>
            <person name="Okitani R."/>
            <person name="Kawakami T."/>
            <person name="Noguchi S."/>
            <person name="Itoh T."/>
            <person name="Shigeta K."/>
            <person name="Senba T."/>
            <person name="Matsumura K."/>
            <person name="Nakajima Y."/>
            <person name="Mizuno T."/>
            <person name="Morinaga M."/>
            <person name="Sasaki M."/>
            <person name="Togashi T."/>
            <person name="Oyama M."/>
            <person name="Hata H."/>
            <person name="Watanabe M."/>
            <person name="Komatsu T."/>
            <person name="Mizushima-Sugano J."/>
            <person name="Satoh T."/>
            <person name="Shirai Y."/>
            <person name="Takahashi Y."/>
            <person name="Nakagawa K."/>
            <person name="Okumura K."/>
            <person name="Nagase T."/>
            <person name="Nomura N."/>
            <person name="Kikuchi H."/>
            <person name="Masuho Y."/>
            <person name="Yamashita R."/>
            <person name="Nakai K."/>
            <person name="Yada T."/>
            <person name="Nakamura Y."/>
            <person name="Ohara O."/>
            <person name="Isogai T."/>
            <person name="Sugano S."/>
        </authorList>
    </citation>
    <scope>NUCLEOTIDE SEQUENCE [LARGE SCALE MRNA] (ISOFORM 2)</scope>
    <source>
        <tissue>Brain</tissue>
    </source>
</reference>
<reference key="8">
    <citation type="journal article" date="2003" name="Nature">
        <title>The DNA sequence and analysis of human chromosome 14.</title>
        <authorList>
            <person name="Heilig R."/>
            <person name="Eckenberg R."/>
            <person name="Petit J.-L."/>
            <person name="Fonknechten N."/>
            <person name="Da Silva C."/>
            <person name="Cattolico L."/>
            <person name="Levy M."/>
            <person name="Barbe V."/>
            <person name="De Berardinis V."/>
            <person name="Ureta-Vidal A."/>
            <person name="Pelletier E."/>
            <person name="Vico V."/>
            <person name="Anthouard V."/>
            <person name="Rowen L."/>
            <person name="Madan A."/>
            <person name="Qin S."/>
            <person name="Sun H."/>
            <person name="Du H."/>
            <person name="Pepin K."/>
            <person name="Artiguenave F."/>
            <person name="Robert C."/>
            <person name="Cruaud C."/>
            <person name="Bruels T."/>
            <person name="Jaillon O."/>
            <person name="Friedlander L."/>
            <person name="Samson G."/>
            <person name="Brottier P."/>
            <person name="Cure S."/>
            <person name="Segurens B."/>
            <person name="Aniere F."/>
            <person name="Samain S."/>
            <person name="Crespeau H."/>
            <person name="Abbasi N."/>
            <person name="Aiach N."/>
            <person name="Boscus D."/>
            <person name="Dickhoff R."/>
            <person name="Dors M."/>
            <person name="Dubois I."/>
            <person name="Friedman C."/>
            <person name="Gouyvenoux M."/>
            <person name="James R."/>
            <person name="Madan A."/>
            <person name="Mairey-Estrada B."/>
            <person name="Mangenot S."/>
            <person name="Martins N."/>
            <person name="Menard M."/>
            <person name="Oztas S."/>
            <person name="Ratcliffe A."/>
            <person name="Shaffer T."/>
            <person name="Trask B."/>
            <person name="Vacherie B."/>
            <person name="Bellemere C."/>
            <person name="Belser C."/>
            <person name="Besnard-Gonnet M."/>
            <person name="Bartol-Mavel D."/>
            <person name="Boutard M."/>
            <person name="Briez-Silla S."/>
            <person name="Combette S."/>
            <person name="Dufosse-Laurent V."/>
            <person name="Ferron C."/>
            <person name="Lechaplais C."/>
            <person name="Louesse C."/>
            <person name="Muselet D."/>
            <person name="Magdelenat G."/>
            <person name="Pateau E."/>
            <person name="Petit E."/>
            <person name="Sirvain-Trukniewicz P."/>
            <person name="Trybou A."/>
            <person name="Vega-Czarny N."/>
            <person name="Bataille E."/>
            <person name="Bluet E."/>
            <person name="Bordelais I."/>
            <person name="Dubois M."/>
            <person name="Dumont C."/>
            <person name="Guerin T."/>
            <person name="Haffray S."/>
            <person name="Hammadi R."/>
            <person name="Muanga J."/>
            <person name="Pellouin V."/>
            <person name="Robert D."/>
            <person name="Wunderle E."/>
            <person name="Gauguet G."/>
            <person name="Roy A."/>
            <person name="Sainte-Marthe L."/>
            <person name="Verdier J."/>
            <person name="Verdier-Discala C."/>
            <person name="Hillier L.W."/>
            <person name="Fulton L."/>
            <person name="McPherson J."/>
            <person name="Matsuda F."/>
            <person name="Wilson R."/>
            <person name="Scarpelli C."/>
            <person name="Gyapay G."/>
            <person name="Wincker P."/>
            <person name="Saurin W."/>
            <person name="Quetier F."/>
            <person name="Waterston R."/>
            <person name="Hood L."/>
            <person name="Weissenbach J."/>
        </authorList>
    </citation>
    <scope>NUCLEOTIDE SEQUENCE [LARGE SCALE GENOMIC DNA]</scope>
</reference>
<reference key="9">
    <citation type="submission" date="2005-07" db="EMBL/GenBank/DDBJ databases">
        <authorList>
            <person name="Mural R.J."/>
            <person name="Istrail S."/>
            <person name="Sutton G.G."/>
            <person name="Florea L."/>
            <person name="Halpern A.L."/>
            <person name="Mobarry C.M."/>
            <person name="Lippert R."/>
            <person name="Walenz B."/>
            <person name="Shatkay H."/>
            <person name="Dew I."/>
            <person name="Miller J.R."/>
            <person name="Flanigan M.J."/>
            <person name="Edwards N.J."/>
            <person name="Bolanos R."/>
            <person name="Fasulo D."/>
            <person name="Halldorsson B.V."/>
            <person name="Hannenhalli S."/>
            <person name="Turner R."/>
            <person name="Yooseph S."/>
            <person name="Lu F."/>
            <person name="Nusskern D.R."/>
            <person name="Shue B.C."/>
            <person name="Zheng X.H."/>
            <person name="Zhong F."/>
            <person name="Delcher A.L."/>
            <person name="Huson D.H."/>
            <person name="Kravitz S.A."/>
            <person name="Mouchard L."/>
            <person name="Reinert K."/>
            <person name="Remington K.A."/>
            <person name="Clark A.G."/>
            <person name="Waterman M.S."/>
            <person name="Eichler E.E."/>
            <person name="Adams M.D."/>
            <person name="Hunkapiller M.W."/>
            <person name="Myers E.W."/>
            <person name="Venter J.C."/>
        </authorList>
    </citation>
    <scope>NUCLEOTIDE SEQUENCE [LARGE SCALE GENOMIC DNA]</scope>
</reference>
<reference key="10">
    <citation type="journal article" date="2004" name="Genome Res.">
        <title>The status, quality, and expansion of the NIH full-length cDNA project: the Mammalian Gene Collection (MGC).</title>
        <authorList>
            <consortium name="The MGC Project Team"/>
        </authorList>
    </citation>
    <scope>NUCLEOTIDE SEQUENCE [LARGE SCALE MRNA]</scope>
    <source>
        <tissue>Colon</tissue>
        <tissue>Skin</tissue>
    </source>
</reference>
<reference key="11">
    <citation type="journal article" date="1990" name="Cancer Res.">
        <title>Expression of human alpha-actinin in human hepatocellular carcinoma.</title>
        <authorList>
            <person name="Nishiyama M."/>
            <person name="Ozturk M."/>
            <person name="Frohlich M."/>
            <person name="Mafune K."/>
            <person name="Steele G. Jr."/>
            <person name="Wands J.R."/>
        </authorList>
    </citation>
    <scope>NUCLEOTIDE SEQUENCE [MRNA] OF 297-892 (ISOFORM 1)</scope>
</reference>
<reference key="12">
    <citation type="journal article" date="2003" name="Nat. Biotechnol.">
        <title>Exploring proteomes and analyzing protein processing by mass spectrometric identification of sorted N-terminal peptides.</title>
        <authorList>
            <person name="Gevaert K."/>
            <person name="Goethals M."/>
            <person name="Martens L."/>
            <person name="Van Damme J."/>
            <person name="Staes A."/>
            <person name="Thomas G.R."/>
            <person name="Vandekerckhove J."/>
        </authorList>
    </citation>
    <scope>PROTEIN SEQUENCE OF 1-21</scope>
    <source>
        <tissue>Platelet</tissue>
    </source>
</reference>
<reference key="13">
    <citation type="journal article" date="1996" name="Biochem. Biophys. Res. Commun.">
        <title>Identification of the 70kD heat shock cognate protein (Hsc70) and alpha-actinin-1 as novel phosphotyrosine-containing proteins in T lymphocytes.</title>
        <authorList>
            <person name="Egerton M."/>
            <person name="Moritz R.L."/>
            <person name="Druker B."/>
            <person name="Kelso A."/>
            <person name="Simpson R.J."/>
        </authorList>
    </citation>
    <scope>PROTEIN SEQUENCE OF 134-146</scope>
</reference>
<reference key="14">
    <citation type="journal article" date="1995" name="FEBS Lett.">
        <title>Identification of the cytoskeletal protein alpha-actinin as a platelet thrombospondin-binding protein.</title>
        <authorList>
            <person name="Dubernard V."/>
            <person name="Faucher D."/>
            <person name="Launay J.-M."/>
            <person name="Legrand C."/>
        </authorList>
    </citation>
    <scope>PROTEIN SEQUENCE OF 566-577; 727-738 AND 835-863</scope>
    <scope>SUBCELLULAR LOCATION</scope>
</reference>
<reference key="15">
    <citation type="journal article" date="1999" name="Hum. Mol. Genet.">
        <title>Myotilin, a novel sarcomeric protein with two Ig-like domains, is encoded by a candidate gene for limb-girdle muscular dystrophy.</title>
        <authorList>
            <person name="Salmikangas P."/>
            <person name="Mykkaenen O.M."/>
            <person name="Groenholm M."/>
            <person name="Heiska L."/>
            <person name="Kere J."/>
            <person name="Carpen O."/>
        </authorList>
    </citation>
    <scope>INTERACTION WITH TTID</scope>
</reference>
<reference key="16">
    <citation type="journal article" date="2000" name="Proc. Natl. Acad. Sci. U.S.A.">
        <title>Calsarcins, a novel family of sarcomeric calcineurin-binding proteins.</title>
        <authorList>
            <person name="Frey N."/>
            <person name="Richardson J.A."/>
            <person name="Olson E.N."/>
        </authorList>
    </citation>
    <scope>INTERACTION WITH MYOZ2</scope>
</reference>
<reference key="17">
    <citation type="journal article" date="2001" name="J. Biol. Chem.">
        <title>The cytoskeletal/non-muscle isoform of alpha-actinin is phosphorylated on its actin-binding domain by the focal adhesion kinase.</title>
        <authorList>
            <person name="Izaguirre G."/>
            <person name="Aguirre L."/>
            <person name="Hu Y.P."/>
            <person name="Lee H.Y."/>
            <person name="Schlaepfer D.D."/>
            <person name="Aneskievich B.J."/>
            <person name="Haimovich B."/>
        </authorList>
    </citation>
    <scope>PHOSPHORYLATION AT TYR-12</scope>
</reference>
<reference key="18">
    <citation type="journal article" date="2003" name="J. Cell Sci.">
        <title>The lipoma preferred partner LPP interacts with alpha-actinin.</title>
        <authorList>
            <person name="Li B."/>
            <person name="Zhuang L."/>
            <person name="Reinhard M."/>
            <person name="Trueb B."/>
        </authorList>
    </citation>
    <scope>INTERACTION WITH LPP</scope>
</reference>
<reference key="19">
    <citation type="journal article" date="2006" name="J. Neurochem.">
        <title>Postsynaptic recruitment of Dendrin depends on both dendritic mRNA transport and synaptic anchoring.</title>
        <authorList>
            <person name="Kremerskothen J."/>
            <person name="Kindler S."/>
            <person name="Finger I."/>
            <person name="Veltel S."/>
            <person name="Barnekow A."/>
        </authorList>
    </citation>
    <scope>INTERACTION WITH DDN</scope>
</reference>
<reference key="20">
    <citation type="journal article" date="2009" name="Science">
        <title>Lysine acetylation targets protein complexes and co-regulates major cellular functions.</title>
        <authorList>
            <person name="Choudhary C."/>
            <person name="Kumar C."/>
            <person name="Gnad F."/>
            <person name="Nielsen M.L."/>
            <person name="Rehman M."/>
            <person name="Walther T.C."/>
            <person name="Olsen J.V."/>
            <person name="Mann M."/>
        </authorList>
    </citation>
    <scope>ACETYLATION [LARGE SCALE ANALYSIS] AT LYS-95; LYS-195 AND LYS-676</scope>
    <scope>IDENTIFICATION BY MASS SPECTROMETRY [LARGE SCALE ANALYSIS]</scope>
</reference>
<reference key="21">
    <citation type="journal article" date="2011" name="BMC Syst. Biol.">
        <title>Initial characterization of the human central proteome.</title>
        <authorList>
            <person name="Burkard T.R."/>
            <person name="Planyavsky M."/>
            <person name="Kaupe I."/>
            <person name="Breitwieser F.P."/>
            <person name="Buerckstuemmer T."/>
            <person name="Bennett K.L."/>
            <person name="Superti-Furga G."/>
            <person name="Colinge J."/>
        </authorList>
    </citation>
    <scope>IDENTIFICATION BY MASS SPECTROMETRY [LARGE SCALE ANALYSIS]</scope>
</reference>
<reference key="22">
    <citation type="journal article" date="2011" name="Sci. Signal.">
        <title>System-wide temporal characterization of the proteome and phosphoproteome of human embryonic stem cell differentiation.</title>
        <authorList>
            <person name="Rigbolt K.T."/>
            <person name="Prokhorova T.A."/>
            <person name="Akimov V."/>
            <person name="Henningsen J."/>
            <person name="Johansen P.T."/>
            <person name="Kratchmarova I."/>
            <person name="Kassem M."/>
            <person name="Mann M."/>
            <person name="Olsen J.V."/>
            <person name="Blagoev B."/>
        </authorList>
    </citation>
    <scope>ACETYLATION [LARGE SCALE ANALYSIS] AT MET-1</scope>
    <scope>PHOSPHORYLATION [LARGE SCALE ANALYSIS] AT SER-6</scope>
    <scope>IDENTIFICATION BY MASS SPECTROMETRY [LARGE SCALE ANALYSIS]</scope>
</reference>
<reference key="23">
    <citation type="journal article" date="2012" name="J. Immunol.">
        <title>EWI-2 association with alpha-actinin regulates T cell immune synapses and HIV viral infection.</title>
        <authorList>
            <person name="Gordon-Alonso M."/>
            <person name="Sala-Valdes M."/>
            <person name="Rocha-Perugini V."/>
            <person name="Perez-Hernandez D."/>
            <person name="Lopez-Martin S."/>
            <person name="Ursa A."/>
            <person name="Alvarez S."/>
            <person name="Kolesnikova T.V."/>
            <person name="Vazquez J."/>
            <person name="Sanchez-Madrid F."/>
            <person name="Yanez-Mo M."/>
        </authorList>
    </citation>
    <scope>FUNCTION</scope>
    <scope>SUBCELLULAR LOCATION</scope>
    <scope>INTERACTION WITH IGSF8</scope>
</reference>
<reference key="24">
    <citation type="journal article" date="2014" name="J. Proteomics">
        <title>An enzyme assisted RP-RPLC approach for in-depth analysis of human liver phosphoproteome.</title>
        <authorList>
            <person name="Bian Y."/>
            <person name="Song C."/>
            <person name="Cheng K."/>
            <person name="Dong M."/>
            <person name="Wang F."/>
            <person name="Huang J."/>
            <person name="Sun D."/>
            <person name="Wang L."/>
            <person name="Ye M."/>
            <person name="Zou H."/>
        </authorList>
    </citation>
    <scope>PHOSPHORYLATION [LARGE SCALE ANALYSIS] AT SER-471 AND SER-677</scope>
    <scope>IDENTIFICATION BY MASS SPECTROMETRY [LARGE SCALE ANALYSIS]</scope>
    <source>
        <tissue>Liver</tissue>
    </source>
</reference>
<reference key="25">
    <citation type="journal article" date="2015" name="Proteomics">
        <title>N-terminome analysis of the human mitochondrial proteome.</title>
        <authorList>
            <person name="Vaca Jacome A.S."/>
            <person name="Rabilloud T."/>
            <person name="Schaeffer-Reiss C."/>
            <person name="Rompais M."/>
            <person name="Ayoub D."/>
            <person name="Lane L."/>
            <person name="Bairoch A."/>
            <person name="Van Dorsselaer A."/>
            <person name="Carapito C."/>
        </authorList>
    </citation>
    <scope>IDENTIFICATION BY MASS SPECTROMETRY [LARGE SCALE ANALYSIS]</scope>
</reference>
<reference key="26">
    <citation type="journal article" date="2006" name="J. Struct. Biol.">
        <title>Crystal structure of the actin-binding domain of alpha-actinin 1: evaluating two competing actin-binding models.</title>
        <authorList>
            <person name="Borrego-Diaz E."/>
            <person name="Kerff F."/>
            <person name="Lee S.H."/>
            <person name="Ferron F."/>
            <person name="Li Y."/>
            <person name="Dominguez R."/>
        </authorList>
    </citation>
    <scope>X-RAY CRYSTALLOGRAPHY (1.7 ANGSTROMS) OF 30-253</scope>
</reference>
<reference key="27">
    <citation type="journal article" date="2013" name="Am. J. Hum. Genet.">
        <title>ACTN1 mutations cause congenital macrothrombocytopenia.</title>
        <authorList>
            <person name="Kunishima S."/>
            <person name="Okuno Y."/>
            <person name="Yoshida K."/>
            <person name="Shiraishi Y."/>
            <person name="Sanada M."/>
            <person name="Muramatsu H."/>
            <person name="Chiba K."/>
            <person name="Tanaka H."/>
            <person name="Miyazaki K."/>
            <person name="Sakai M."/>
            <person name="Ohtake M."/>
            <person name="Kobayashi R."/>
            <person name="Iguchi A."/>
            <person name="Niimi G."/>
            <person name="Otsu M."/>
            <person name="Takahashi Y."/>
            <person name="Miyano S."/>
            <person name="Saito H."/>
            <person name="Kojima S."/>
            <person name="Ogawa S."/>
        </authorList>
    </citation>
    <scope>VARIANTS BDPLT15 LYS-32; GLN-46; ILE-105; LYS-225; TRP-738 AND GLN-752</scope>
    <scope>VARIANT TRP-197</scope>
    <scope>CHARACTERIZATION OF VARIANTS BDPLT15 LYS-32 AND ILE-105</scope>
</reference>
<reference key="28">
    <citation type="journal article" date="2013" name="PLoS ONE">
        <title>A missense mutation in the alpha-actinin 1 gene (ACTN1) is the cause of autosomal dominant macrothrombocytopenia in a large French family.</title>
        <authorList>
            <person name="Gueguen P."/>
            <person name="Rouault K."/>
            <person name="Chen J.M."/>
            <person name="Raguenes O."/>
            <person name="Fichou Y."/>
            <person name="Hardy E."/>
            <person name="Gobin E."/>
            <person name="Pan-Petesch B."/>
            <person name="Kerbiriou M."/>
            <person name="Trouve P."/>
            <person name="Marcorelles P."/>
            <person name="Abgrall J.F."/>
            <person name="Le Marechal C."/>
            <person name="Ferec C."/>
        </authorList>
    </citation>
    <scope>VARIANT BDPLT15 GLN-46</scope>
    <scope>CHARACTERIZATION OF VARIANT BDPLT15 GLN-46</scope>
    <scope>SUBCELLULAR LOCATION</scope>
</reference>
<accession>P12814</accession>
<accession>B3V8S3</accession>
<accession>B4DHH3</accession>
<accession>B7TY16</accession>
<accession>Q1HE25</accession>
<accession>Q9BTN1</accession>
<name>ACTN1_HUMAN</name>
<comment type="function">
    <text evidence="10">F-actin cross-linking protein which is thought to anchor actin to a variety of intracellular structures. Association with IGSF8 regulates the immune synapse formation and is required for efficient T-cell activation (PubMed:22689882).</text>
</comment>
<comment type="subunit">
    <text evidence="1 2 5 6 8 9 10">Homodimer; antiparallel. Interacts with MYOZ2, TTID and LPP (PubMed:10369880, PubMed:11114196, PubMed:12615977). Interacts with DDN (PubMed:16464232). Interacts with PSD. Interacts with MICALL2 (By similarity). Interacts with DNM2 and CTTN. Interacts with PDLIM1. Interacts with PDLIM2. Interacts with PDLIM4 (via PDZ domain) (By similarity). Interacts with IGSF8 (PubMed:22689882).</text>
</comment>
<comment type="interaction">
    <interactant intactId="EBI-351710">
        <id>P12814</id>
    </interactant>
    <interactant intactId="EBI-77797">
        <id>P35609</id>
        <label>ACTN2</label>
    </interactant>
    <organismsDiffer>false</organismsDiffer>
    <experiments>3</experiments>
</comment>
<comment type="interaction">
    <interactant intactId="EBI-351710">
        <id>P12814</id>
    </interactant>
    <interactant intactId="EBI-2880652">
        <id>Q08043</id>
        <label>ACTN3</label>
    </interactant>
    <organismsDiffer>false</organismsDiffer>
    <experiments>3</experiments>
</comment>
<comment type="interaction">
    <interactant intactId="EBI-351710">
        <id>P12814</id>
    </interactant>
    <interactant intactId="EBI-743771">
        <id>Q92624</id>
        <label>APPBP2</label>
    </interactant>
    <organismsDiffer>false</organismsDiffer>
    <experiments>3</experiments>
</comment>
<comment type="interaction">
    <interactant intactId="EBI-351710">
        <id>P12814</id>
    </interactant>
    <interactant intactId="EBI-11107474">
        <id>Q96QS3</id>
        <label>ARX</label>
    </interactant>
    <organismsDiffer>false</organismsDiffer>
    <experiments>2</experiments>
</comment>
<comment type="interaction">
    <interactant intactId="EBI-351710">
        <id>P12814</id>
    </interactant>
    <interactant intactId="EBI-725606">
        <id>Q9NWQ9</id>
        <label>C14orf119</label>
    </interactant>
    <organismsDiffer>false</organismsDiffer>
    <experiments>4</experiments>
</comment>
<comment type="interaction">
    <interactant intactId="EBI-351710">
        <id>P12814</id>
    </interactant>
    <interactant intactId="EBI-1038838">
        <id>Q13936</id>
        <label>CACNA1C</label>
    </interactant>
    <organismsDiffer>false</organismsDiffer>
    <experiments>2</experiments>
</comment>
<comment type="interaction">
    <interactant intactId="EBI-351710">
        <id>P12814</id>
    </interactant>
    <interactant intactId="EBI-741724">
        <id>Q8NA61</id>
        <label>CBY2</label>
    </interactant>
    <organismsDiffer>false</organismsDiffer>
    <experiments>3</experiments>
</comment>
<comment type="interaction">
    <interactant intactId="EBI-351710">
        <id>P12814</id>
    </interactant>
    <interactant intactId="EBI-1176455">
        <id>P63172</id>
        <label>DYNLT1</label>
    </interactant>
    <organismsDiffer>false</organismsDiffer>
    <experiments>3</experiments>
</comment>
<comment type="interaction">
    <interactant intactId="EBI-351710">
        <id>P12814</id>
    </interactant>
    <interactant intactId="EBI-1056162">
        <id>P05198</id>
        <label>EIF2S1</label>
    </interactant>
    <organismsDiffer>false</organismsDiffer>
    <experiments>3</experiments>
</comment>
<comment type="interaction">
    <interactant intactId="EBI-351710">
        <id>P12814</id>
    </interactant>
    <interactant intactId="EBI-6255981">
        <id>Q7L775</id>
        <label>EPM2AIP1</label>
    </interactant>
    <organismsDiffer>false</organismsDiffer>
    <experiments>6</experiments>
</comment>
<comment type="interaction">
    <interactant intactId="EBI-351710">
        <id>P12814</id>
    </interactant>
    <interactant intactId="EBI-448202">
        <id>O95257</id>
        <label>GADD45G</label>
    </interactant>
    <organismsDiffer>false</organismsDiffer>
    <experiments>3</experiments>
</comment>
<comment type="interaction">
    <interactant intactId="EBI-351710">
        <id>P12814</id>
    </interactant>
    <interactant intactId="EBI-4291090">
        <id>Q9Y223</id>
        <label>GNE</label>
    </interactant>
    <organismsDiffer>false</organismsDiffer>
    <experiments>3</experiments>
</comment>
<comment type="interaction">
    <interactant intactId="EBI-351710">
        <id>P12814</id>
    </interactant>
    <interactant intactId="EBI-2511344">
        <id>Q8NC69</id>
        <label>KCTD6</label>
    </interactant>
    <organismsDiffer>false</organismsDiffer>
    <experiments>3</experiments>
</comment>
<comment type="interaction">
    <interactant intactId="EBI-351710">
        <id>P12814</id>
    </interactant>
    <interactant intactId="EBI-739832">
        <id>Q8TBB1</id>
        <label>LNX1</label>
    </interactant>
    <organismsDiffer>false</organismsDiffer>
    <experiments>3</experiments>
</comment>
<comment type="interaction">
    <interactant intactId="EBI-351710">
        <id>P12814</id>
    </interactant>
    <interactant intactId="EBI-2555563">
        <id>Q8IY33</id>
        <label>MICALL2</label>
    </interactant>
    <organismsDiffer>false</organismsDiffer>
    <experiments>6</experiments>
</comment>
<comment type="interaction">
    <interactant intactId="EBI-351710">
        <id>P12814</id>
    </interactant>
    <interactant intactId="EBI-16430371">
        <id>A0A0S2Z4Y0</id>
        <label>MYOT</label>
    </interactant>
    <organismsDiffer>false</organismsDiffer>
    <experiments>3</experiments>
</comment>
<comment type="interaction">
    <interactant intactId="EBI-351710">
        <id>P12814</id>
    </interactant>
    <interactant intactId="EBI-744402">
        <id>Q9NP98</id>
        <label>MYOZ1</label>
    </interactant>
    <organismsDiffer>false</organismsDiffer>
    <experiments>4</experiments>
</comment>
<comment type="interaction">
    <interactant intactId="EBI-351710">
        <id>P12814</id>
    </interactant>
    <interactant intactId="EBI-746712">
        <id>Q9NPC6</id>
        <label>MYOZ2</label>
    </interactant>
    <organismsDiffer>false</organismsDiffer>
    <experiments>11</experiments>
</comment>
<comment type="interaction">
    <interactant intactId="EBI-351710">
        <id>P12814</id>
    </interactant>
    <interactant intactId="EBI-3920396">
        <id>Q6ZUT1</id>
        <label>NKAPD1</label>
    </interactant>
    <organismsDiffer>false</organismsDiffer>
    <experiments>3</experiments>
</comment>
<comment type="interaction">
    <interactant intactId="EBI-351710">
        <id>P12814</id>
    </interactant>
    <interactant intactId="EBI-3932815">
        <id>P00973</id>
        <label>OAS1</label>
    </interactant>
    <organismsDiffer>false</organismsDiffer>
    <experiments>4</experiments>
</comment>
<comment type="interaction">
    <interactant intactId="EBI-351710">
        <id>P12814</id>
    </interactant>
    <interactant intactId="EBI-12081862">
        <id>P00973-2</id>
        <label>OAS1</label>
    </interactant>
    <organismsDiffer>false</organismsDiffer>
    <experiments>3</experiments>
</comment>
<comment type="interaction">
    <interactant intactId="EBI-351710">
        <id>P12814</id>
    </interactant>
    <interactant intactId="EBI-372861">
        <id>P50479</id>
        <label>PDLIM4</label>
    </interactant>
    <organismsDiffer>false</organismsDiffer>
    <experiments>3</experiments>
</comment>
<comment type="interaction">
    <interactant intactId="EBI-351710">
        <id>P12814</id>
    </interactant>
    <interactant intactId="EBI-1752330">
        <id>Q9BYB0</id>
        <label>SHANK3</label>
    </interactant>
    <organismsDiffer>false</organismsDiffer>
    <experiments>2</experiments>
</comment>
<comment type="interaction">
    <interactant intactId="EBI-351710">
        <id>P12814</id>
    </interactant>
    <interactant intactId="EBI-621482">
        <id>P12931</id>
        <label>SRC</label>
    </interactant>
    <organismsDiffer>false</organismsDiffer>
    <experiments>2</experiments>
</comment>
<comment type="interaction">
    <interactant intactId="EBI-351710">
        <id>P12814</id>
    </interactant>
    <interactant intactId="EBI-352936">
        <id>Q8N3V7</id>
        <label>SYNPO</label>
    </interactant>
    <organismsDiffer>false</organismsDiffer>
    <experiments>2</experiments>
</comment>
<comment type="interaction">
    <interactant intactId="EBI-351710">
        <id>P12814</id>
    </interactant>
    <interactant intactId="EBI-12082116">
        <id>Q9H987-2</id>
        <label>SYNPO2L</label>
    </interactant>
    <organismsDiffer>false</organismsDiffer>
    <experiments>3</experiments>
</comment>
<comment type="interaction">
    <interactant intactId="EBI-351710">
        <id>P12814</id>
    </interactant>
    <interactant intactId="EBI-681210">
        <id>Q8WZ42</id>
        <label>TTN</label>
    </interactant>
    <organismsDiffer>false</organismsDiffer>
    <experiments>2</experiments>
</comment>
<comment type="interaction">
    <interactant intactId="EBI-351710">
        <id>P12814</id>
    </interactant>
    <interactant intactId="EBI-594644">
        <id>P10599</id>
        <label>TXN</label>
    </interactant>
    <organismsDiffer>false</organismsDiffer>
    <experiments>3</experiments>
</comment>
<comment type="interaction">
    <interactant intactId="EBI-351710">
        <id>P12814</id>
    </interactant>
    <interactant intactId="EBI-743272">
        <id>O75604</id>
        <label>USP2</label>
    </interactant>
    <organismsDiffer>false</organismsDiffer>
    <experiments>3</experiments>
</comment>
<comment type="interaction">
    <interactant intactId="EBI-351710">
        <id>P12814</id>
    </interactant>
    <interactant intactId="EBI-10175581">
        <id>B2R8Y4</id>
    </interactant>
    <organismsDiffer>false</organismsDiffer>
    <experiments>3</experiments>
</comment>
<comment type="interaction">
    <interactant intactId="EBI-351710">
        <id>P12814</id>
    </interactant>
    <interactant intactId="EBI-6654049">
        <id>Q8VC66</id>
        <label>Ssx2ip</label>
    </interactant>
    <organismsDiffer>true</organismsDiffer>
    <experiments>3</experiments>
</comment>
<comment type="interaction">
    <interactant intactId="EBI-351710">
        <id>P12814</id>
    </interactant>
    <interactant intactId="EBI-6904388">
        <id>PRO_0000037577</id>
        <dbReference type="UniProtKB" id="P27958"/>
    </interactant>
    <organismsDiffer>true</organismsDiffer>
    <experiments>7</experiments>
</comment>
<comment type="subcellular location">
    <subcellularLocation>
        <location evidence="12 13">Cytoplasm</location>
        <location evidence="12 13">Cytoskeleton</location>
    </subcellularLocation>
    <subcellularLocation>
        <location evidence="13">Cytoplasm</location>
        <location evidence="13">Myofibril</location>
        <location evidence="13">Sarcomere</location>
        <location evidence="13">Z line</location>
    </subcellularLocation>
    <subcellularLocation>
        <location evidence="10">Cell membrane</location>
    </subcellularLocation>
    <subcellularLocation>
        <location evidence="2">Cell junction</location>
    </subcellularLocation>
    <subcellularLocation>
        <location evidence="1">Cell projection</location>
        <location evidence="1">Ruffle</location>
    </subcellularLocation>
    <text evidence="1">Colocalizes with MYOZ2 and PPP3CA at the Z-line of heart and skeletal muscle. Colocalizes with PSD in membrane ruffles and central reticular structures.</text>
</comment>
<comment type="alternative products">
    <event type="alternative splicing"/>
    <isoform>
        <id>P12814-1</id>
        <name>1</name>
        <sequence type="displayed"/>
    </isoform>
    <isoform>
        <id>P12814-2</id>
        <name>2</name>
        <sequence type="described" ref="VSP_041264"/>
    </isoform>
    <isoform>
        <id>P12814-3</id>
        <name>3</name>
        <sequence type="described" ref="VSP_043525"/>
    </isoform>
    <isoform>
        <id>P12814-4</id>
        <name>4</name>
        <sequence type="described" ref="VSP_041264 VSP_047763"/>
    </isoform>
</comment>
<comment type="disease" evidence="11 12">
    <disease id="DI-03753">
        <name>Bleeding disorder, platelet-type, 15</name>
        <acronym>BDPLT15</acronym>
        <description>An autosomal dominant form of macrothrombocytopenia. Affected individuals usually have no or only mild bleeding tendency, such as epistaxis. Laboratory studies show decreased numbers of large platelets and anisocytosis, but the platelets show no in vitro functional abnormalities.</description>
        <dbReference type="MIM" id="615193"/>
    </disease>
    <text>The disease is caused by variants affecting the gene represented in this entry.</text>
</comment>
<comment type="similarity">
    <text evidence="18">Belongs to the alpha-actinin family.</text>
</comment>
<sequence>MDHYDSQQTNDYMQPEEDWDRDLLLDPAWEKQQRKTFTAWCNSHLRKAGTQIENIEEDFRDGLKLMLLLEVISGERLAKPERGKMRVHKISNVNKALDFIASKGVKLVSIGAEEIVDGNVKMTLGMIWTIILRFAIQDISVEETSAKEGLLLWCQRKTAPYKNVNIQNFHISWKDGLGFCALIHRHRPELIDYGKLRKDDPLTNLNTAFDVAEKYLDIPKMLDAEDIVGTARPDEKAIMTYVSSFYHAFSGAQKAETAANRICKVLAVNQENEQLMEDYEKLASDLLEWIRRTIPWLENRVPENTMHAMQQKLEDFRDYRRLHKPPKVQEKCQLEINFNTLQTKLRLSNRPAFMPSEGRMVSDINNAWGCLEQVEKGYEEWLLNEIRRLERLDHLAEKFRQKASIHEAWTDGKEAMLRQKDYETATLSEIKALLKKHEAFESDLAAHQDRVEQIAAIAQELNELDYYDSPSVNARCQKICDQWDNLGALTQKRREALERTEKLLETIDQLYLEYAKRAAPFNNWMEGAMEDLQDTFIVHTIEEIQGLTTAHEQFKATLPDADKERLAILGIHNEVSKIVQTYHVNMAGTNPYTTITPQEINGKWDHVRQLVPRRDQALTEEHARQQHNERLRKQFGAQANVIGPWIQTKMEEIGRISIEMHGTLEDQLSHLRQYEKSIVNYKPKIDQLEGDHQLIQEALIFDNKHTNYTMEHIRVGWEQLLTTIARTINEVENQILTRDAKGISQEQMNEFRASFNHFDRDHSGTLGPEEFKACLISLGYDIGNDPQGEAEFARIMSIVDPNRLGVVTFQAFIDFMSRETADTDTADQVMASFKILAGDKNYITMDELRRELPPDQAEYCIARMAPYTGPDSVPGALDYMSFSTALYGESDL</sequence>
<feature type="chain" id="PRO_0000073431" description="Alpha-actinin-1">
    <location>
        <begin position="1"/>
        <end position="892"/>
    </location>
</feature>
<feature type="domain" description="Calponin-homology (CH) 1" evidence="3">
    <location>
        <begin position="31"/>
        <end position="135"/>
    </location>
</feature>
<feature type="domain" description="Calponin-homology (CH) 2" evidence="3">
    <location>
        <begin position="144"/>
        <end position="250"/>
    </location>
</feature>
<feature type="repeat" description="Spectrin 1">
    <location>
        <begin position="274"/>
        <end position="384"/>
    </location>
</feature>
<feature type="repeat" description="Spectrin 2">
    <location>
        <begin position="394"/>
        <end position="499"/>
    </location>
</feature>
<feature type="repeat" description="Spectrin 3">
    <location>
        <begin position="509"/>
        <end position="620"/>
    </location>
</feature>
<feature type="repeat" description="Spectrin 4">
    <location>
        <begin position="630"/>
        <end position="733"/>
    </location>
</feature>
<feature type="domain" description="EF-hand 1" evidence="4">
    <location>
        <begin position="746"/>
        <end position="781"/>
    </location>
</feature>
<feature type="domain" description="EF-hand 2" evidence="4">
    <location>
        <begin position="787"/>
        <end position="822"/>
    </location>
</feature>
<feature type="region of interest" description="Actin-binding">
    <location>
        <begin position="1"/>
        <end position="247"/>
    </location>
</feature>
<feature type="region of interest" description="Interaction with DDN" evidence="9">
    <location>
        <begin position="274"/>
        <end position="733"/>
    </location>
</feature>
<feature type="binding site" evidence="4">
    <location>
        <position position="759"/>
    </location>
    <ligand>
        <name>Ca(2+)</name>
        <dbReference type="ChEBI" id="CHEBI:29108"/>
    </ligand>
</feature>
<feature type="binding site" evidence="4">
    <location>
        <position position="761"/>
    </location>
    <ligand>
        <name>Ca(2+)</name>
        <dbReference type="ChEBI" id="CHEBI:29108"/>
    </ligand>
</feature>
<feature type="binding site" evidence="4">
    <location>
        <position position="763"/>
    </location>
    <ligand>
        <name>Ca(2+)</name>
        <dbReference type="ChEBI" id="CHEBI:29108"/>
    </ligand>
</feature>
<feature type="binding site" evidence="4">
    <location>
        <position position="765"/>
    </location>
    <ligand>
        <name>Ca(2+)</name>
        <dbReference type="ChEBI" id="CHEBI:29108"/>
    </ligand>
</feature>
<feature type="binding site" evidence="4">
    <location>
        <position position="770"/>
    </location>
    <ligand>
        <name>Ca(2+)</name>
        <dbReference type="ChEBI" id="CHEBI:29108"/>
    </ligand>
</feature>
<feature type="modified residue" description="N-acetylmethionine" evidence="20">
    <location>
        <position position="1"/>
    </location>
</feature>
<feature type="modified residue" description="Phosphoserine" evidence="20">
    <location>
        <position position="6"/>
    </location>
</feature>
<feature type="modified residue" description="Phosphotyrosine; by FAK1" evidence="7">
    <location>
        <position position="12"/>
    </location>
</feature>
<feature type="modified residue" description="N6-acetyllysine" evidence="19">
    <location>
        <position position="95"/>
    </location>
</feature>
<feature type="modified residue" description="N6-acetyllysine" evidence="19">
    <location>
        <position position="195"/>
    </location>
</feature>
<feature type="modified residue" description="Phosphoserine" evidence="21">
    <location>
        <position position="471"/>
    </location>
</feature>
<feature type="modified residue" description="N6-acetyllysine" evidence="19">
    <location>
        <position position="676"/>
    </location>
</feature>
<feature type="modified residue" description="Phosphoserine" evidence="21">
    <location>
        <position position="677"/>
    </location>
</feature>
<feature type="modified residue" description="Phosphoserine" evidence="2">
    <location>
        <position position="890"/>
    </location>
</feature>
<feature type="splice variant" id="VSP_041264" description="In isoform 2 and isoform 4." evidence="14 15 17">
    <original>DHSGTLGPEEFKACLISLGYDIGNDPQ</original>
    <variation>KKTGMMDTDDFRACLISMGYNM</variation>
    <location>
        <begin position="761"/>
        <end position="787"/>
    </location>
</feature>
<feature type="splice variant" id="VSP_043525" description="In isoform 3." evidence="16">
    <original>Q</original>
    <variation>QKKTGMMDTDDFRACLISMGYNM</variation>
    <location>
        <position position="787"/>
    </location>
</feature>
<feature type="splice variant" id="VSP_047763" description="In isoform 4." evidence="17">
    <original>K</original>
    <variation>KLQEGGKMQTAHAAFTPPGFAAVSGRAALRLLDFAAFLTTLSSQ</variation>
    <location>
        <position position="840"/>
    </location>
</feature>
<feature type="sequence variant" id="VAR_069910" description="In BDPLT15; the mutation dominantly affects the actin filament assembly likely resulting in abnormal cytoskeletal organization; dbSNP:rs387907346." evidence="11">
    <original>Q</original>
    <variation>K</variation>
    <location>
        <position position="32"/>
    </location>
</feature>
<feature type="sequence variant" id="VAR_069911" description="In BDPLT15; disorganization of the actin and alpha-actinin 1 filaments; dbSNP:rs387907348." evidence="11 12">
    <original>R</original>
    <variation>Q</variation>
    <location>
        <position position="46"/>
    </location>
</feature>
<feature type="sequence variant" id="VAR_069912" description="In BDPLT15; the mutation dominantly affects the actin filament assembly likely resulting in abnormal cytoskeletal organization; dbSNP:rs387907345." evidence="11">
    <original>V</original>
    <variation>I</variation>
    <location>
        <position position="105"/>
    </location>
</feature>
<feature type="sequence variant" id="VAR_069913" description="In dbSNP:rs904887313." evidence="11">
    <original>R</original>
    <variation>W</variation>
    <location>
        <position position="197"/>
    </location>
</feature>
<feature type="sequence variant" id="VAR_069914" description="In BDPLT15; dbSNP:rs387907350." evidence="11">
    <original>E</original>
    <variation>K</variation>
    <location>
        <position position="225"/>
    </location>
</feature>
<feature type="sequence variant" id="VAR_053883" description="In dbSNP:rs7157661.">
    <original>N</original>
    <variation>T</variation>
    <location>
        <position position="707"/>
    </location>
</feature>
<feature type="sequence variant" id="VAR_069915" description="In BDPLT15; dbSNP:rs387907349." evidence="11">
    <original>R</original>
    <variation>W</variation>
    <location>
        <position position="738"/>
    </location>
</feature>
<feature type="sequence variant" id="VAR_069916" description="In BDPLT15; dbSNP:rs387907347." evidence="11">
    <original>R</original>
    <variation>Q</variation>
    <location>
        <position position="752"/>
    </location>
</feature>
<feature type="sequence variant" id="VAR_053884" description="In dbSNP:rs11557769.">
    <original>T</original>
    <variation>S</variation>
    <location>
        <position position="868"/>
    </location>
</feature>
<feature type="sequence conflict" description="In Ref. 11; CAA38970." evidence="18" ref="11">
    <original>R</original>
    <variation>L</variation>
    <location>
        <position position="317"/>
    </location>
</feature>
<feature type="sequence conflict" description="In Ref. 7; BAG58135." evidence="18" ref="7">
    <original>R</original>
    <variation>H</variation>
    <location>
        <position position="321"/>
    </location>
</feature>
<feature type="sequence conflict" description="In Ref. 7; BAG58135." evidence="18" ref="7">
    <original>T</original>
    <variation>A</variation>
    <location>
        <position position="424"/>
    </location>
</feature>
<feature type="sequence conflict" description="In Ref. 11; CAA38970." evidence="18" ref="11">
    <original>Q</original>
    <variation>L</variation>
    <location>
        <position position="477"/>
    </location>
</feature>
<feature type="sequence conflict" description="In Ref. 1; CAA33803." evidence="18" ref="1">
    <original>RL</original>
    <variation>SV</variation>
    <location>
        <begin position="630"/>
        <end position="631"/>
    </location>
</feature>
<feature type="sequence conflict" description="In Ref. 11; CAA38970." evidence="18" ref="11">
    <original>GRI</original>
    <variation>ARF</variation>
    <location>
        <begin position="654"/>
        <end position="656"/>
    </location>
</feature>
<feature type="sequence conflict" description="In Ref. 11; CAA38970." evidence="18" ref="11">
    <original>Y</original>
    <variation>D</variation>
    <location>
        <position position="674"/>
    </location>
</feature>
<feature type="sequence conflict" description="In Ref. 11; CAA38970." evidence="18" ref="11">
    <original>L</original>
    <variation>S</variation>
    <location>
        <position position="778"/>
    </location>
</feature>
<feature type="helix" evidence="22">
    <location>
        <begin position="30"/>
        <end position="45"/>
    </location>
</feature>
<feature type="helix" evidence="22">
    <location>
        <begin position="46"/>
        <end position="48"/>
    </location>
</feature>
<feature type="turn" evidence="22">
    <location>
        <begin position="55"/>
        <end position="61"/>
    </location>
</feature>
<feature type="helix" evidence="22">
    <location>
        <begin position="63"/>
        <end position="73"/>
    </location>
</feature>
<feature type="helix" evidence="22">
    <location>
        <begin position="86"/>
        <end position="102"/>
    </location>
</feature>
<feature type="helix" evidence="22">
    <location>
        <begin position="112"/>
        <end position="116"/>
    </location>
</feature>
<feature type="helix" evidence="22">
    <location>
        <begin position="120"/>
        <end position="135"/>
    </location>
</feature>
<feature type="turn" evidence="22">
    <location>
        <begin position="136"/>
        <end position="138"/>
    </location>
</feature>
<feature type="helix" evidence="22">
    <location>
        <begin position="146"/>
        <end position="158"/>
    </location>
</feature>
<feature type="strand" evidence="22">
    <location>
        <begin position="168"/>
        <end position="170"/>
    </location>
</feature>
<feature type="helix" evidence="22">
    <location>
        <begin position="171"/>
        <end position="173"/>
    </location>
</feature>
<feature type="helix" evidence="22">
    <location>
        <begin position="177"/>
        <end position="186"/>
    </location>
</feature>
<feature type="helix" evidence="22">
    <location>
        <begin position="188"/>
        <end position="190"/>
    </location>
</feature>
<feature type="helix" evidence="22">
    <location>
        <begin position="193"/>
        <end position="195"/>
    </location>
</feature>
<feature type="helix" evidence="22">
    <location>
        <begin position="201"/>
        <end position="215"/>
    </location>
</feature>
<feature type="helix" evidence="22">
    <location>
        <begin position="224"/>
        <end position="229"/>
    </location>
</feature>
<feature type="strand" evidence="22">
    <location>
        <begin position="230"/>
        <end position="232"/>
    </location>
</feature>
<feature type="helix" evidence="22">
    <location>
        <begin position="235"/>
        <end position="249"/>
    </location>
</feature>
<feature type="helix" evidence="23">
    <location>
        <begin position="745"/>
        <end position="751"/>
    </location>
</feature>
<feature type="helix" evidence="23">
    <location>
        <begin position="754"/>
        <end position="757"/>
    </location>
</feature>
<feature type="strand" evidence="23">
    <location>
        <begin position="763"/>
        <end position="766"/>
    </location>
</feature>
<feature type="helix" evidence="23">
    <location>
        <begin position="768"/>
        <end position="774"/>
    </location>
</feature>
<feature type="helix" evidence="23">
    <location>
        <begin position="775"/>
        <end position="778"/>
    </location>
</feature>
<feature type="helix" evidence="23">
    <location>
        <begin position="788"/>
        <end position="798"/>
    </location>
</feature>
<feature type="strand" evidence="23">
    <location>
        <begin position="803"/>
        <end position="807"/>
    </location>
</feature>
<feature type="helix" evidence="23">
    <location>
        <begin position="809"/>
        <end position="816"/>
    </location>
</feature>
<feature type="helix" evidence="23">
    <location>
        <begin position="818"/>
        <end position="820"/>
    </location>
</feature>
<feature type="helix" evidence="23">
    <location>
        <begin position="826"/>
        <end position="830"/>
    </location>
</feature>
<feature type="helix" evidence="23">
    <location>
        <begin position="832"/>
        <end position="837"/>
    </location>
</feature>
<feature type="strand" evidence="23">
    <location>
        <begin position="841"/>
        <end position="844"/>
    </location>
</feature>
<feature type="helix" evidence="23">
    <location>
        <begin position="845"/>
        <end position="851"/>
    </location>
</feature>
<feature type="helix" evidence="23">
    <location>
        <begin position="855"/>
        <end position="863"/>
    </location>
</feature>
<feature type="strand" evidence="23">
    <location>
        <begin position="864"/>
        <end position="867"/>
    </location>
</feature>
<feature type="strand" evidence="23">
    <location>
        <begin position="869"/>
        <end position="872"/>
    </location>
</feature>
<feature type="strand" evidence="23">
    <location>
        <begin position="876"/>
        <end position="881"/>
    </location>
</feature>
<feature type="turn" evidence="23">
    <location>
        <begin position="884"/>
        <end position="888"/>
    </location>
</feature>
<gene>
    <name type="primary">ACTN1</name>
</gene>
<evidence type="ECO:0000250" key="1">
    <source>
        <dbReference type="UniProtKB" id="Q7TPR4"/>
    </source>
</evidence>
<evidence type="ECO:0000250" key="2">
    <source>
        <dbReference type="UniProtKB" id="Q9Z1P2"/>
    </source>
</evidence>
<evidence type="ECO:0000255" key="3">
    <source>
        <dbReference type="PROSITE-ProRule" id="PRU00044"/>
    </source>
</evidence>
<evidence type="ECO:0000255" key="4">
    <source>
        <dbReference type="PROSITE-ProRule" id="PRU00448"/>
    </source>
</evidence>
<evidence type="ECO:0000269" key="5">
    <source>
    </source>
</evidence>
<evidence type="ECO:0000269" key="6">
    <source>
    </source>
</evidence>
<evidence type="ECO:0000269" key="7">
    <source>
    </source>
</evidence>
<evidence type="ECO:0000269" key="8">
    <source>
    </source>
</evidence>
<evidence type="ECO:0000269" key="9">
    <source>
    </source>
</evidence>
<evidence type="ECO:0000269" key="10">
    <source>
    </source>
</evidence>
<evidence type="ECO:0000269" key="11">
    <source>
    </source>
</evidence>
<evidence type="ECO:0000269" key="12">
    <source>
    </source>
</evidence>
<evidence type="ECO:0000269" key="13">
    <source>
    </source>
</evidence>
<evidence type="ECO:0000303" key="14">
    <source>
    </source>
</evidence>
<evidence type="ECO:0000303" key="15">
    <source>
    </source>
</evidence>
<evidence type="ECO:0000303" key="16">
    <source ref="4"/>
</evidence>
<evidence type="ECO:0000303" key="17">
    <source ref="5"/>
</evidence>
<evidence type="ECO:0000305" key="18"/>
<evidence type="ECO:0007744" key="19">
    <source>
    </source>
</evidence>
<evidence type="ECO:0007744" key="20">
    <source>
    </source>
</evidence>
<evidence type="ECO:0007744" key="21">
    <source>
    </source>
</evidence>
<evidence type="ECO:0007829" key="22">
    <source>
        <dbReference type="PDB" id="2EYI"/>
    </source>
</evidence>
<evidence type="ECO:0007829" key="23">
    <source>
        <dbReference type="PDB" id="2N8Y"/>
    </source>
</evidence>
<protein>
    <recommendedName>
        <fullName>Alpha-actinin-1</fullName>
    </recommendedName>
    <alternativeName>
        <fullName>Alpha-actinin cytoskeletal isoform</fullName>
    </alternativeName>
    <alternativeName>
        <fullName>F-actin cross-linking protein</fullName>
    </alternativeName>
    <alternativeName>
        <fullName>Non-muscle alpha-actinin-1</fullName>
    </alternativeName>
</protein>
<organism>
    <name type="scientific">Homo sapiens</name>
    <name type="common">Human</name>
    <dbReference type="NCBI Taxonomy" id="9606"/>
    <lineage>
        <taxon>Eukaryota</taxon>
        <taxon>Metazoa</taxon>
        <taxon>Chordata</taxon>
        <taxon>Craniata</taxon>
        <taxon>Vertebrata</taxon>
        <taxon>Euteleostomi</taxon>
        <taxon>Mammalia</taxon>
        <taxon>Eutheria</taxon>
        <taxon>Euarchontoglires</taxon>
        <taxon>Primates</taxon>
        <taxon>Haplorrhini</taxon>
        <taxon>Catarrhini</taxon>
        <taxon>Hominidae</taxon>
        <taxon>Homo</taxon>
    </lineage>
</organism>